<gene>
    <name evidence="1" type="primary">ispG</name>
    <name type="ordered locus">Psyr_1248</name>
</gene>
<organism>
    <name type="scientific">Pseudomonas syringae pv. syringae (strain B728a)</name>
    <dbReference type="NCBI Taxonomy" id="205918"/>
    <lineage>
        <taxon>Bacteria</taxon>
        <taxon>Pseudomonadati</taxon>
        <taxon>Pseudomonadota</taxon>
        <taxon>Gammaproteobacteria</taxon>
        <taxon>Pseudomonadales</taxon>
        <taxon>Pseudomonadaceae</taxon>
        <taxon>Pseudomonas</taxon>
        <taxon>Pseudomonas syringae</taxon>
    </lineage>
</organism>
<reference key="1">
    <citation type="journal article" date="2005" name="Proc. Natl. Acad. Sci. U.S.A.">
        <title>Comparison of the complete genome sequences of Pseudomonas syringae pv. syringae B728a and pv. tomato DC3000.</title>
        <authorList>
            <person name="Feil H."/>
            <person name="Feil W.S."/>
            <person name="Chain P."/>
            <person name="Larimer F."/>
            <person name="Dibartolo G."/>
            <person name="Copeland A."/>
            <person name="Lykidis A."/>
            <person name="Trong S."/>
            <person name="Nolan M."/>
            <person name="Goltsman E."/>
            <person name="Thiel J."/>
            <person name="Malfatti S."/>
            <person name="Loper J.E."/>
            <person name="Lapidus A."/>
            <person name="Detter J.C."/>
            <person name="Land M."/>
            <person name="Richardson P.M."/>
            <person name="Kyrpides N.C."/>
            <person name="Ivanova N."/>
            <person name="Lindow S.E."/>
        </authorList>
    </citation>
    <scope>NUCLEOTIDE SEQUENCE [LARGE SCALE GENOMIC DNA]</scope>
    <source>
        <strain>B728a</strain>
    </source>
</reference>
<protein>
    <recommendedName>
        <fullName evidence="1">4-hydroxy-3-methylbut-2-en-1-yl diphosphate synthase (flavodoxin)</fullName>
        <ecNumber evidence="1">1.17.7.3</ecNumber>
    </recommendedName>
    <alternativeName>
        <fullName evidence="1">1-hydroxy-2-methyl-2-(E)-butenyl 4-diphosphate synthase</fullName>
    </alternativeName>
</protein>
<proteinExistence type="inferred from homology"/>
<name>ISPG_PSEU2</name>
<comment type="function">
    <text evidence="1">Converts 2C-methyl-D-erythritol 2,4-cyclodiphosphate (ME-2,4cPP) into 1-hydroxy-2-methyl-2-(E)-butenyl 4-diphosphate.</text>
</comment>
<comment type="catalytic activity">
    <reaction evidence="1">
        <text>(2E)-4-hydroxy-3-methylbut-2-enyl diphosphate + oxidized [flavodoxin] + H2O + 2 H(+) = 2-C-methyl-D-erythritol 2,4-cyclic diphosphate + reduced [flavodoxin]</text>
        <dbReference type="Rhea" id="RHEA:43604"/>
        <dbReference type="Rhea" id="RHEA-COMP:10622"/>
        <dbReference type="Rhea" id="RHEA-COMP:10623"/>
        <dbReference type="ChEBI" id="CHEBI:15377"/>
        <dbReference type="ChEBI" id="CHEBI:15378"/>
        <dbReference type="ChEBI" id="CHEBI:57618"/>
        <dbReference type="ChEBI" id="CHEBI:58210"/>
        <dbReference type="ChEBI" id="CHEBI:58483"/>
        <dbReference type="ChEBI" id="CHEBI:128753"/>
        <dbReference type="EC" id="1.17.7.3"/>
    </reaction>
</comment>
<comment type="cofactor">
    <cofactor evidence="1">
        <name>[4Fe-4S] cluster</name>
        <dbReference type="ChEBI" id="CHEBI:49883"/>
    </cofactor>
    <text evidence="1">Binds 1 [4Fe-4S] cluster.</text>
</comment>
<comment type="pathway">
    <text evidence="1">Isoprenoid biosynthesis; isopentenyl diphosphate biosynthesis via DXP pathway; isopentenyl diphosphate from 1-deoxy-D-xylulose 5-phosphate: step 5/6.</text>
</comment>
<comment type="similarity">
    <text evidence="1">Belongs to the IspG family.</text>
</comment>
<dbReference type="EC" id="1.17.7.3" evidence="1"/>
<dbReference type="EMBL" id="CP000075">
    <property type="protein sequence ID" value="AAY36299.1"/>
    <property type="molecule type" value="Genomic_DNA"/>
</dbReference>
<dbReference type="RefSeq" id="WP_004406481.1">
    <property type="nucleotide sequence ID" value="NC_007005.1"/>
</dbReference>
<dbReference type="RefSeq" id="YP_234337.1">
    <property type="nucleotide sequence ID" value="NC_007005.1"/>
</dbReference>
<dbReference type="SMR" id="Q4ZX23"/>
<dbReference type="STRING" id="205918.Psyr_1248"/>
<dbReference type="KEGG" id="psb:Psyr_1248"/>
<dbReference type="PATRIC" id="fig|205918.7.peg.1280"/>
<dbReference type="eggNOG" id="COG0821">
    <property type="taxonomic scope" value="Bacteria"/>
</dbReference>
<dbReference type="HOGENOM" id="CLU_042258_0_0_6"/>
<dbReference type="OrthoDB" id="9803214at2"/>
<dbReference type="UniPathway" id="UPA00056">
    <property type="reaction ID" value="UER00096"/>
</dbReference>
<dbReference type="Proteomes" id="UP000000426">
    <property type="component" value="Chromosome"/>
</dbReference>
<dbReference type="GO" id="GO:0051539">
    <property type="term" value="F:4 iron, 4 sulfur cluster binding"/>
    <property type="evidence" value="ECO:0007669"/>
    <property type="project" value="UniProtKB-UniRule"/>
</dbReference>
<dbReference type="GO" id="GO:0046429">
    <property type="term" value="F:4-hydroxy-3-methylbut-2-en-1-yl diphosphate synthase activity (ferredoxin)"/>
    <property type="evidence" value="ECO:0007669"/>
    <property type="project" value="UniProtKB-UniRule"/>
</dbReference>
<dbReference type="GO" id="GO:0141197">
    <property type="term" value="F:4-hydroxy-3-methylbut-2-enyl-diphosphate synthase activity (flavodoxin)"/>
    <property type="evidence" value="ECO:0007669"/>
    <property type="project" value="UniProtKB-EC"/>
</dbReference>
<dbReference type="GO" id="GO:0005506">
    <property type="term" value="F:iron ion binding"/>
    <property type="evidence" value="ECO:0007669"/>
    <property type="project" value="InterPro"/>
</dbReference>
<dbReference type="GO" id="GO:0019288">
    <property type="term" value="P:isopentenyl diphosphate biosynthetic process, methylerythritol 4-phosphate pathway"/>
    <property type="evidence" value="ECO:0007669"/>
    <property type="project" value="UniProtKB-UniRule"/>
</dbReference>
<dbReference type="GO" id="GO:0016114">
    <property type="term" value="P:terpenoid biosynthetic process"/>
    <property type="evidence" value="ECO:0007669"/>
    <property type="project" value="InterPro"/>
</dbReference>
<dbReference type="FunFam" id="3.20.20.20:FF:000001">
    <property type="entry name" value="4-hydroxy-3-methylbut-2-en-1-yl diphosphate synthase (flavodoxin)"/>
    <property type="match status" value="1"/>
</dbReference>
<dbReference type="Gene3D" id="3.20.20.20">
    <property type="entry name" value="Dihydropteroate synthase-like"/>
    <property type="match status" value="1"/>
</dbReference>
<dbReference type="Gene3D" id="3.30.413.10">
    <property type="entry name" value="Sulfite Reductase Hemoprotein, domain 1"/>
    <property type="match status" value="1"/>
</dbReference>
<dbReference type="HAMAP" id="MF_00159">
    <property type="entry name" value="IspG"/>
    <property type="match status" value="1"/>
</dbReference>
<dbReference type="InterPro" id="IPR011005">
    <property type="entry name" value="Dihydropteroate_synth-like_sf"/>
</dbReference>
<dbReference type="InterPro" id="IPR016425">
    <property type="entry name" value="IspG_bac"/>
</dbReference>
<dbReference type="InterPro" id="IPR004588">
    <property type="entry name" value="IspG_bac-typ"/>
</dbReference>
<dbReference type="InterPro" id="IPR045854">
    <property type="entry name" value="NO2/SO3_Rdtase_4Fe4S_sf"/>
</dbReference>
<dbReference type="NCBIfam" id="TIGR00612">
    <property type="entry name" value="ispG_gcpE"/>
    <property type="match status" value="1"/>
</dbReference>
<dbReference type="NCBIfam" id="NF001540">
    <property type="entry name" value="PRK00366.1"/>
    <property type="match status" value="1"/>
</dbReference>
<dbReference type="PANTHER" id="PTHR30454">
    <property type="entry name" value="4-HYDROXY-3-METHYLBUT-2-EN-1-YL DIPHOSPHATE SYNTHASE"/>
    <property type="match status" value="1"/>
</dbReference>
<dbReference type="PANTHER" id="PTHR30454:SF0">
    <property type="entry name" value="4-HYDROXY-3-METHYLBUT-2-EN-1-YL DIPHOSPHATE SYNTHASE (FERREDOXIN), CHLOROPLASTIC"/>
    <property type="match status" value="1"/>
</dbReference>
<dbReference type="Pfam" id="PF04551">
    <property type="entry name" value="GcpE"/>
    <property type="match status" value="1"/>
</dbReference>
<dbReference type="PIRSF" id="PIRSF004640">
    <property type="entry name" value="IspG"/>
    <property type="match status" value="1"/>
</dbReference>
<dbReference type="SUPFAM" id="SSF51412">
    <property type="entry name" value="Inosine monophosphate dehydrogenase (IMPDH)"/>
    <property type="match status" value="1"/>
</dbReference>
<dbReference type="SUPFAM" id="SSF56014">
    <property type="entry name" value="Nitrite and sulphite reductase 4Fe-4S domain-like"/>
    <property type="match status" value="1"/>
</dbReference>
<sequence>MHGESPIKRRESRKIWVGSVPVGGDAPIAVQSMTNSDTNDVAATVAQINRLEAAGVDIVRVSVPDMDAAEAFGRIKQLVKVPLVADIHFDHRIALRVAELGVDCLRINPGNIGREDRVRAVVDAARDRGIPIRIGVNAGSLEKDLQKKYGEPTPEALVESALRHVEHLQRLNFQDFKVSVKASDVFMAVAAYRLLAKEIVQPLHLGITEAGGLRSGTVKSAVGLGMLLAEGIGDTIRISLAADPVEEVKVGYDILKSLRLRSRGINFIACPSCSRQNFDVVKTMNELEGRLEDLLVPLDVAVIGCVVNGPGEAKEAHIGLTGGTPNLIYIDGKPAQKLTNDNLVNELERLIREKAAEKAEADASVIVRG</sequence>
<evidence type="ECO:0000255" key="1">
    <source>
        <dbReference type="HAMAP-Rule" id="MF_00159"/>
    </source>
</evidence>
<accession>Q4ZX23</accession>
<keyword id="KW-0004">4Fe-4S</keyword>
<keyword id="KW-0408">Iron</keyword>
<keyword id="KW-0411">Iron-sulfur</keyword>
<keyword id="KW-0414">Isoprene biosynthesis</keyword>
<keyword id="KW-0479">Metal-binding</keyword>
<keyword id="KW-0560">Oxidoreductase</keyword>
<feature type="chain" id="PRO_1000011504" description="4-hydroxy-3-methylbut-2-en-1-yl diphosphate synthase (flavodoxin)">
    <location>
        <begin position="1"/>
        <end position="369"/>
    </location>
</feature>
<feature type="binding site" evidence="1">
    <location>
        <position position="270"/>
    </location>
    <ligand>
        <name>[4Fe-4S] cluster</name>
        <dbReference type="ChEBI" id="CHEBI:49883"/>
    </ligand>
</feature>
<feature type="binding site" evidence="1">
    <location>
        <position position="273"/>
    </location>
    <ligand>
        <name>[4Fe-4S] cluster</name>
        <dbReference type="ChEBI" id="CHEBI:49883"/>
    </ligand>
</feature>
<feature type="binding site" evidence="1">
    <location>
        <position position="305"/>
    </location>
    <ligand>
        <name>[4Fe-4S] cluster</name>
        <dbReference type="ChEBI" id="CHEBI:49883"/>
    </ligand>
</feature>
<feature type="binding site" evidence="1">
    <location>
        <position position="312"/>
    </location>
    <ligand>
        <name>[4Fe-4S] cluster</name>
        <dbReference type="ChEBI" id="CHEBI:49883"/>
    </ligand>
</feature>